<sequence>MEDLLVVGQIINTHGLRGEMKVMPLTEDMRRFDYLEYVILKGKKVKVEGVKYFKDKVILKLEGINSIEEAEKLKRTYLEIEREDAIELEEDEYFIVDLVGCTVVDTEGFEYGKIKDVIQTPSNDVYWVQGKKEVLVPVLKDIVLDINMDEKLITIRPSGEWQYED</sequence>
<dbReference type="EMBL" id="BA000016">
    <property type="protein sequence ID" value="BAB81416.1"/>
    <property type="molecule type" value="Genomic_DNA"/>
</dbReference>
<dbReference type="RefSeq" id="WP_003458412.1">
    <property type="nucleotide sequence ID" value="NC_003366.1"/>
</dbReference>
<dbReference type="SMR" id="Q8XJP6"/>
<dbReference type="STRING" id="195102.gene:10490974"/>
<dbReference type="GeneID" id="93001752"/>
<dbReference type="KEGG" id="cpe:CPE1710"/>
<dbReference type="HOGENOM" id="CLU_077636_3_2_9"/>
<dbReference type="Proteomes" id="UP000000818">
    <property type="component" value="Chromosome"/>
</dbReference>
<dbReference type="GO" id="GO:0005737">
    <property type="term" value="C:cytoplasm"/>
    <property type="evidence" value="ECO:0007669"/>
    <property type="project" value="UniProtKB-SubCell"/>
</dbReference>
<dbReference type="GO" id="GO:0005840">
    <property type="term" value="C:ribosome"/>
    <property type="evidence" value="ECO:0007669"/>
    <property type="project" value="InterPro"/>
</dbReference>
<dbReference type="GO" id="GO:0043022">
    <property type="term" value="F:ribosome binding"/>
    <property type="evidence" value="ECO:0007669"/>
    <property type="project" value="InterPro"/>
</dbReference>
<dbReference type="GO" id="GO:0042274">
    <property type="term" value="P:ribosomal small subunit biogenesis"/>
    <property type="evidence" value="ECO:0007669"/>
    <property type="project" value="UniProtKB-UniRule"/>
</dbReference>
<dbReference type="GO" id="GO:0006364">
    <property type="term" value="P:rRNA processing"/>
    <property type="evidence" value="ECO:0007669"/>
    <property type="project" value="UniProtKB-UniRule"/>
</dbReference>
<dbReference type="Gene3D" id="2.30.30.240">
    <property type="entry name" value="PRC-barrel domain"/>
    <property type="match status" value="1"/>
</dbReference>
<dbReference type="Gene3D" id="2.40.30.60">
    <property type="entry name" value="RimM"/>
    <property type="match status" value="1"/>
</dbReference>
<dbReference type="HAMAP" id="MF_00014">
    <property type="entry name" value="Ribosome_mat_RimM"/>
    <property type="match status" value="1"/>
</dbReference>
<dbReference type="InterPro" id="IPR027275">
    <property type="entry name" value="PRC-brl_dom"/>
</dbReference>
<dbReference type="InterPro" id="IPR011033">
    <property type="entry name" value="PRC_barrel-like_sf"/>
</dbReference>
<dbReference type="InterPro" id="IPR011961">
    <property type="entry name" value="RimM"/>
</dbReference>
<dbReference type="InterPro" id="IPR002676">
    <property type="entry name" value="RimM_N"/>
</dbReference>
<dbReference type="InterPro" id="IPR036976">
    <property type="entry name" value="RimM_N_sf"/>
</dbReference>
<dbReference type="InterPro" id="IPR009000">
    <property type="entry name" value="Transl_B-barrel_sf"/>
</dbReference>
<dbReference type="NCBIfam" id="TIGR02273">
    <property type="entry name" value="16S_RimM"/>
    <property type="match status" value="1"/>
</dbReference>
<dbReference type="PANTHER" id="PTHR33692">
    <property type="entry name" value="RIBOSOME MATURATION FACTOR RIMM"/>
    <property type="match status" value="1"/>
</dbReference>
<dbReference type="PANTHER" id="PTHR33692:SF1">
    <property type="entry name" value="RIBOSOME MATURATION FACTOR RIMM"/>
    <property type="match status" value="1"/>
</dbReference>
<dbReference type="Pfam" id="PF05239">
    <property type="entry name" value="PRC"/>
    <property type="match status" value="1"/>
</dbReference>
<dbReference type="Pfam" id="PF01782">
    <property type="entry name" value="RimM"/>
    <property type="match status" value="1"/>
</dbReference>
<dbReference type="SUPFAM" id="SSF50346">
    <property type="entry name" value="PRC-barrel domain"/>
    <property type="match status" value="1"/>
</dbReference>
<dbReference type="SUPFAM" id="SSF50447">
    <property type="entry name" value="Translation proteins"/>
    <property type="match status" value="1"/>
</dbReference>
<protein>
    <recommendedName>
        <fullName evidence="1">Ribosome maturation factor RimM</fullName>
    </recommendedName>
</protein>
<accession>Q8XJP6</accession>
<gene>
    <name evidence="1" type="primary">rimM</name>
    <name type="ordered locus">CPE1710</name>
</gene>
<proteinExistence type="inferred from homology"/>
<comment type="function">
    <text evidence="1">An accessory protein needed during the final step in the assembly of 30S ribosomal subunit, possibly for assembly of the head region. Essential for efficient processing of 16S rRNA. May be needed both before and after RbfA during the maturation of 16S rRNA. It has affinity for free ribosomal 30S subunits but not for 70S ribosomes.</text>
</comment>
<comment type="subunit">
    <text evidence="1">Binds ribosomal protein uS19.</text>
</comment>
<comment type="subcellular location">
    <subcellularLocation>
        <location evidence="1">Cytoplasm</location>
    </subcellularLocation>
</comment>
<comment type="domain">
    <text evidence="1">The PRC barrel domain binds ribosomal protein uS19.</text>
</comment>
<comment type="similarity">
    <text evidence="1">Belongs to the RimM family.</text>
</comment>
<evidence type="ECO:0000255" key="1">
    <source>
        <dbReference type="HAMAP-Rule" id="MF_00014"/>
    </source>
</evidence>
<keyword id="KW-0143">Chaperone</keyword>
<keyword id="KW-0963">Cytoplasm</keyword>
<keyword id="KW-1185">Reference proteome</keyword>
<keyword id="KW-0690">Ribosome biogenesis</keyword>
<keyword id="KW-0698">rRNA processing</keyword>
<name>RIMM_CLOPE</name>
<reference key="1">
    <citation type="journal article" date="2002" name="Proc. Natl. Acad. Sci. U.S.A.">
        <title>Complete genome sequence of Clostridium perfringens, an anaerobic flesh-eater.</title>
        <authorList>
            <person name="Shimizu T."/>
            <person name="Ohtani K."/>
            <person name="Hirakawa H."/>
            <person name="Ohshima K."/>
            <person name="Yamashita A."/>
            <person name="Shiba T."/>
            <person name="Ogasawara N."/>
            <person name="Hattori M."/>
            <person name="Kuhara S."/>
            <person name="Hayashi H."/>
        </authorList>
    </citation>
    <scope>NUCLEOTIDE SEQUENCE [LARGE SCALE GENOMIC DNA]</scope>
    <source>
        <strain>13 / Type A</strain>
    </source>
</reference>
<organism>
    <name type="scientific">Clostridium perfringens (strain 13 / Type A)</name>
    <dbReference type="NCBI Taxonomy" id="195102"/>
    <lineage>
        <taxon>Bacteria</taxon>
        <taxon>Bacillati</taxon>
        <taxon>Bacillota</taxon>
        <taxon>Clostridia</taxon>
        <taxon>Eubacteriales</taxon>
        <taxon>Clostridiaceae</taxon>
        <taxon>Clostridium</taxon>
    </lineage>
</organism>
<feature type="chain" id="PRO_0000163278" description="Ribosome maturation factor RimM">
    <location>
        <begin position="1"/>
        <end position="165"/>
    </location>
</feature>
<feature type="domain" description="PRC barrel" evidence="1">
    <location>
        <begin position="90"/>
        <end position="161"/>
    </location>
</feature>